<name>LIS1_CANAL</name>
<dbReference type="EMBL" id="CP017625">
    <property type="protein sequence ID" value="AOW28103.1"/>
    <property type="molecule type" value="Genomic_DNA"/>
</dbReference>
<dbReference type="RefSeq" id="XP_717782.1">
    <property type="nucleotide sequence ID" value="XM_712689.1"/>
</dbReference>
<dbReference type="SMR" id="Q5A7Q6"/>
<dbReference type="FunCoup" id="Q5A7Q6">
    <property type="interactions" value="64"/>
</dbReference>
<dbReference type="STRING" id="237561.Q5A7Q6"/>
<dbReference type="EnsemblFungi" id="C3_00530C_A-T">
    <property type="protein sequence ID" value="C3_00530C_A-T-p1"/>
    <property type="gene ID" value="C3_00530C_A"/>
</dbReference>
<dbReference type="GeneID" id="3640588"/>
<dbReference type="KEGG" id="cal:CAALFM_C300530CA"/>
<dbReference type="CGD" id="CAL0000197627">
    <property type="gene designation" value="orf19.12865"/>
</dbReference>
<dbReference type="VEuPathDB" id="FungiDB:C3_00530C_A"/>
<dbReference type="eggNOG" id="KOG0295">
    <property type="taxonomic scope" value="Eukaryota"/>
</dbReference>
<dbReference type="HOGENOM" id="CLU_000288_57_15_1"/>
<dbReference type="InParanoid" id="Q5A7Q6"/>
<dbReference type="OMA" id="WHVATKE"/>
<dbReference type="OrthoDB" id="10264588at2759"/>
<dbReference type="PRO" id="PR:Q5A7Q6"/>
<dbReference type="Proteomes" id="UP000000559">
    <property type="component" value="Chromosome 3"/>
</dbReference>
<dbReference type="GO" id="GO:0005881">
    <property type="term" value="C:cytoplasmic microtubule"/>
    <property type="evidence" value="ECO:0000318"/>
    <property type="project" value="GO_Central"/>
</dbReference>
<dbReference type="GO" id="GO:0000776">
    <property type="term" value="C:kinetochore"/>
    <property type="evidence" value="ECO:0000318"/>
    <property type="project" value="GO_Central"/>
</dbReference>
<dbReference type="GO" id="GO:0005875">
    <property type="term" value="C:microtubule associated complex"/>
    <property type="evidence" value="ECO:0000318"/>
    <property type="project" value="GO_Central"/>
</dbReference>
<dbReference type="GO" id="GO:0005635">
    <property type="term" value="C:nuclear envelope"/>
    <property type="evidence" value="ECO:0000318"/>
    <property type="project" value="GO_Central"/>
</dbReference>
<dbReference type="GO" id="GO:0000922">
    <property type="term" value="C:spindle pole"/>
    <property type="evidence" value="ECO:0007669"/>
    <property type="project" value="UniProtKB-SubCell"/>
</dbReference>
<dbReference type="GO" id="GO:0070840">
    <property type="term" value="F:dynein complex binding"/>
    <property type="evidence" value="ECO:0000318"/>
    <property type="project" value="GO_Central"/>
</dbReference>
<dbReference type="GO" id="GO:0051010">
    <property type="term" value="F:microtubule plus-end binding"/>
    <property type="evidence" value="ECO:0000318"/>
    <property type="project" value="GO_Central"/>
</dbReference>
<dbReference type="GO" id="GO:0051301">
    <property type="term" value="P:cell division"/>
    <property type="evidence" value="ECO:0007669"/>
    <property type="project" value="UniProtKB-KW"/>
</dbReference>
<dbReference type="GO" id="GO:0000132">
    <property type="term" value="P:establishment of mitotic spindle orientation"/>
    <property type="evidence" value="ECO:0000318"/>
    <property type="project" value="GO_Central"/>
</dbReference>
<dbReference type="GO" id="GO:0031023">
    <property type="term" value="P:microtubule organizing center organization"/>
    <property type="evidence" value="ECO:0000318"/>
    <property type="project" value="GO_Central"/>
</dbReference>
<dbReference type="GO" id="GO:0051012">
    <property type="term" value="P:microtubule sliding"/>
    <property type="evidence" value="ECO:0007669"/>
    <property type="project" value="UniProtKB-UniRule"/>
</dbReference>
<dbReference type="GO" id="GO:0007097">
    <property type="term" value="P:nuclear migration"/>
    <property type="evidence" value="ECO:0000318"/>
    <property type="project" value="GO_Central"/>
</dbReference>
<dbReference type="GO" id="GO:0047496">
    <property type="term" value="P:vesicle transport along microtubule"/>
    <property type="evidence" value="ECO:0000318"/>
    <property type="project" value="GO_Central"/>
</dbReference>
<dbReference type="CDD" id="cd00200">
    <property type="entry name" value="WD40"/>
    <property type="match status" value="1"/>
</dbReference>
<dbReference type="FunFam" id="2.130.10.10:FF:000902">
    <property type="entry name" value="Nuclear distribution protein PAC1"/>
    <property type="match status" value="1"/>
</dbReference>
<dbReference type="Gene3D" id="1.20.960.30">
    <property type="match status" value="1"/>
</dbReference>
<dbReference type="Gene3D" id="2.130.10.10">
    <property type="entry name" value="YVTN repeat-like/Quinoprotein amine dehydrogenase"/>
    <property type="match status" value="1"/>
</dbReference>
<dbReference type="HAMAP" id="MF_03141">
    <property type="entry name" value="lis1"/>
    <property type="match status" value="1"/>
</dbReference>
<dbReference type="InterPro" id="IPR017252">
    <property type="entry name" value="Dynein_regulator_LIS1"/>
</dbReference>
<dbReference type="InterPro" id="IPR020472">
    <property type="entry name" value="G-protein_beta_WD-40_rep"/>
</dbReference>
<dbReference type="InterPro" id="IPR037190">
    <property type="entry name" value="LIS1_N"/>
</dbReference>
<dbReference type="InterPro" id="IPR015943">
    <property type="entry name" value="WD40/YVTN_repeat-like_dom_sf"/>
</dbReference>
<dbReference type="InterPro" id="IPR019775">
    <property type="entry name" value="WD40_repeat_CS"/>
</dbReference>
<dbReference type="InterPro" id="IPR036322">
    <property type="entry name" value="WD40_repeat_dom_sf"/>
</dbReference>
<dbReference type="InterPro" id="IPR001680">
    <property type="entry name" value="WD40_rpt"/>
</dbReference>
<dbReference type="InterPro" id="IPR050349">
    <property type="entry name" value="WD_LIS1/nudF_dynein_reg"/>
</dbReference>
<dbReference type="PANTHER" id="PTHR44129">
    <property type="entry name" value="WD REPEAT-CONTAINING PROTEIN POP1"/>
    <property type="match status" value="1"/>
</dbReference>
<dbReference type="Pfam" id="PF00400">
    <property type="entry name" value="WD40"/>
    <property type="match status" value="6"/>
</dbReference>
<dbReference type="PIRSF" id="PIRSF037647">
    <property type="entry name" value="Dynein_regulator_Lis1"/>
    <property type="match status" value="1"/>
</dbReference>
<dbReference type="PRINTS" id="PR00320">
    <property type="entry name" value="GPROTEINBRPT"/>
</dbReference>
<dbReference type="SMART" id="SM00320">
    <property type="entry name" value="WD40"/>
    <property type="match status" value="7"/>
</dbReference>
<dbReference type="SUPFAM" id="SSF109925">
    <property type="entry name" value="Lissencephaly-1 protein (Lis-1, PAF-AH alpha) N-terminal domain"/>
    <property type="match status" value="1"/>
</dbReference>
<dbReference type="SUPFAM" id="SSF50978">
    <property type="entry name" value="WD40 repeat-like"/>
    <property type="match status" value="1"/>
</dbReference>
<dbReference type="PROSITE" id="PS00678">
    <property type="entry name" value="WD_REPEATS_1"/>
    <property type="match status" value="2"/>
</dbReference>
<dbReference type="PROSITE" id="PS50082">
    <property type="entry name" value="WD_REPEATS_2"/>
    <property type="match status" value="5"/>
</dbReference>
<dbReference type="PROSITE" id="PS50294">
    <property type="entry name" value="WD_REPEATS_REGION"/>
    <property type="match status" value="1"/>
</dbReference>
<protein>
    <recommendedName>
        <fullName evidence="1">Nuclear distribution protein PAC1</fullName>
    </recommendedName>
    <alternativeName>
        <fullName evidence="1">Lissencephaly-1 homolog</fullName>
        <shortName evidence="1">LIS-1</shortName>
    </alternativeName>
    <alternativeName>
        <fullName evidence="1">nudF homolog</fullName>
    </alternativeName>
</protein>
<gene>
    <name evidence="1" type="primary">PAC1</name>
    <name evidence="1" type="synonym">LIS1</name>
    <name type="ordered locus">CAALFM_C300530CA</name>
    <name type="ORF">CaO19.12865</name>
    <name type="ORF">CaO19.5410</name>
</gene>
<sequence length="486" mass="55358">MEKLQILTERQQTELNHAIIQYLQPLCQQDNHVLLDQLSKLLNIDQSTQESNNVEKVDNYLEKRWSTVLRLQKKIIDLENEISNLNNIINSTNSDNNGIILSKDKINWIPKGAVKQSYQCENIVTTVKLHPNLPLVLNGCNDGNLYIWNISNDDNTIPEKMIKAHTRAINKICFTYKKPYYLATCSSDLTIKIWDEKFNHIRTLNGHEHTVSSIQFSPVDNSILYSVSRDKNIRVWDIFQGISLKSFVGHSEWCRDLDIISSDTYGDFVLTCSNDQSARLSHANSGAGVAMIVGHSHVVETVKFLPSLQANKILDEYITKNTEQFPTIPLELLKDKTYNQLGFKYCITASRDNTIKLWLIPPPTIAPHRPPLPSKYNNSQSWLIAELKGHSSWVKSLCVHPNGKFIISGSDDKTIKFWDLSGLLETGYVNVVKTIIGHDGFINDIDFARLKEASDVSEEDLLKQVEKRMRCLFISGSADNSIKLWN</sequence>
<evidence type="ECO:0000255" key="1">
    <source>
        <dbReference type="HAMAP-Rule" id="MF_03141"/>
    </source>
</evidence>
<feature type="chain" id="PRO_0000240423" description="Nuclear distribution protein PAC1">
    <location>
        <begin position="1"/>
        <end position="486"/>
    </location>
</feature>
<feature type="repeat" description="WD 1">
    <location>
        <begin position="119"/>
        <end position="158"/>
    </location>
</feature>
<feature type="repeat" description="WD 2">
    <location>
        <begin position="164"/>
        <end position="205"/>
    </location>
</feature>
<feature type="repeat" description="WD 3">
    <location>
        <begin position="206"/>
        <end position="246"/>
    </location>
</feature>
<feature type="repeat" description="WD 4">
    <location>
        <begin position="249"/>
        <end position="291"/>
    </location>
</feature>
<feature type="repeat" description="WD 5">
    <location>
        <begin position="294"/>
        <end position="328"/>
    </location>
</feature>
<feature type="repeat" description="WD 6">
    <location>
        <begin position="329"/>
        <end position="368"/>
    </location>
</feature>
<feature type="repeat" description="WD 7">
    <location>
        <begin position="389"/>
        <end position="428"/>
    </location>
</feature>
<feature type="repeat" description="WD 8">
    <location>
        <begin position="437"/>
        <end position="483"/>
    </location>
</feature>
<feature type="coiled-coil region" evidence="1">
    <location>
        <begin position="66"/>
        <end position="99"/>
    </location>
</feature>
<accession>Q5A7Q6</accession>
<accession>A0A1D8PJ30</accession>
<comment type="function">
    <text evidence="1">Positively regulates the activity of the minus-end directed microtubule motor protein dynein. Plays a central role in positioning the mitotic spindle at the bud neck during cell division. Targets cytoplasmic dynein to microtubule plus ends, thereby promoting dynein-mediated microtubule sliding along the bud cortex and consequently the movement of the mitotic spindle to the bud neck.</text>
</comment>
<comment type="subunit">
    <text evidence="1">Self-associates. Interacts with NDL1 and dynein.</text>
</comment>
<comment type="subcellular location">
    <subcellularLocation>
        <location>Cytoplasm</location>
        <location>Cytoskeleton</location>
    </subcellularLocation>
    <subcellularLocation>
        <location evidence="1">Cytoplasm</location>
        <location evidence="1">Cytoskeleton</location>
        <location evidence="1">Spindle pole</location>
    </subcellularLocation>
    <text evidence="1">Localizes to the plus ends of microtubules and the mitotic spindle poles.</text>
</comment>
<comment type="similarity">
    <text evidence="1">Belongs to the WD repeat LIS1/nudF family.</text>
</comment>
<proteinExistence type="inferred from homology"/>
<organism>
    <name type="scientific">Candida albicans (strain SC5314 / ATCC MYA-2876)</name>
    <name type="common">Yeast</name>
    <dbReference type="NCBI Taxonomy" id="237561"/>
    <lineage>
        <taxon>Eukaryota</taxon>
        <taxon>Fungi</taxon>
        <taxon>Dikarya</taxon>
        <taxon>Ascomycota</taxon>
        <taxon>Saccharomycotina</taxon>
        <taxon>Pichiomycetes</taxon>
        <taxon>Debaryomycetaceae</taxon>
        <taxon>Candida/Lodderomyces clade</taxon>
        <taxon>Candida</taxon>
    </lineage>
</organism>
<reference key="1">
    <citation type="journal article" date="2004" name="Proc. Natl. Acad. Sci. U.S.A.">
        <title>The diploid genome sequence of Candida albicans.</title>
        <authorList>
            <person name="Jones T."/>
            <person name="Federspiel N.A."/>
            <person name="Chibana H."/>
            <person name="Dungan J."/>
            <person name="Kalman S."/>
            <person name="Magee B.B."/>
            <person name="Newport G."/>
            <person name="Thorstenson Y.R."/>
            <person name="Agabian N."/>
            <person name="Magee P.T."/>
            <person name="Davis R.W."/>
            <person name="Scherer S."/>
        </authorList>
    </citation>
    <scope>NUCLEOTIDE SEQUENCE [LARGE SCALE GENOMIC DNA]</scope>
    <source>
        <strain>SC5314 / ATCC MYA-2876</strain>
    </source>
</reference>
<reference key="2">
    <citation type="journal article" date="2007" name="Genome Biol.">
        <title>Assembly of the Candida albicans genome into sixteen supercontigs aligned on the eight chromosomes.</title>
        <authorList>
            <person name="van het Hoog M."/>
            <person name="Rast T.J."/>
            <person name="Martchenko M."/>
            <person name="Grindle S."/>
            <person name="Dignard D."/>
            <person name="Hogues H."/>
            <person name="Cuomo C."/>
            <person name="Berriman M."/>
            <person name="Scherer S."/>
            <person name="Magee B.B."/>
            <person name="Whiteway M."/>
            <person name="Chibana H."/>
            <person name="Nantel A."/>
            <person name="Magee P.T."/>
        </authorList>
    </citation>
    <scope>GENOME REANNOTATION</scope>
    <source>
        <strain>SC5314 / ATCC MYA-2876</strain>
    </source>
</reference>
<reference key="3">
    <citation type="journal article" date="2013" name="Genome Biol.">
        <title>Assembly of a phased diploid Candida albicans genome facilitates allele-specific measurements and provides a simple model for repeat and indel structure.</title>
        <authorList>
            <person name="Muzzey D."/>
            <person name="Schwartz K."/>
            <person name="Weissman J.S."/>
            <person name="Sherlock G."/>
        </authorList>
    </citation>
    <scope>NUCLEOTIDE SEQUENCE [LARGE SCALE GENOMIC DNA]</scope>
    <scope>GENOME REANNOTATION</scope>
    <source>
        <strain>SC5314 / ATCC MYA-2876</strain>
    </source>
</reference>
<keyword id="KW-0131">Cell cycle</keyword>
<keyword id="KW-0132">Cell division</keyword>
<keyword id="KW-0175">Coiled coil</keyword>
<keyword id="KW-0963">Cytoplasm</keyword>
<keyword id="KW-0206">Cytoskeleton</keyword>
<keyword id="KW-0493">Microtubule</keyword>
<keyword id="KW-0498">Mitosis</keyword>
<keyword id="KW-1185">Reference proteome</keyword>
<keyword id="KW-0677">Repeat</keyword>
<keyword id="KW-0813">Transport</keyword>
<keyword id="KW-0853">WD repeat</keyword>